<evidence type="ECO:0000250" key="1"/>
<evidence type="ECO:0000250" key="2">
    <source>
        <dbReference type="UniProtKB" id="Q9Y2M5"/>
    </source>
</evidence>
<evidence type="ECO:0000255" key="3">
    <source>
        <dbReference type="PROSITE-ProRule" id="PRU00037"/>
    </source>
</evidence>
<evidence type="ECO:0000269" key="4">
    <source>
    </source>
</evidence>
<evidence type="ECO:0000305" key="5"/>
<protein>
    <recommendedName>
        <fullName>Kelch-like protein 20</fullName>
    </recommendedName>
    <alternativeName>
        <fullName>Kelch-like ECT2-interacting protein</fullName>
    </alternativeName>
</protein>
<name>KLH20_MOUSE</name>
<gene>
    <name type="primary">Klhl20</name>
    <name type="synonym">Kiaa4210</name>
    <name type="synonym">Kleip</name>
</gene>
<comment type="function">
    <text evidence="2">Substrate-specific adapter of a BCR (BTB-CUL3-RBX1) E3 ubiquitin-protein ligase complex involved in interferon response and anterograde Golgi to endosome transport. The BCR(KLHL20) E3 ubiquitin ligase complex mediates the ubiquitination of DAPK1, leading to its degradation by the proteasome, thereby acting as a negative regulator of apoptosis. The BCR(KLHL20) E3 ubiquitin ligase complex also specifically mediates 'Lys-33'-linked ubiquitination. Involved in anterograde Golgi to endosome transport by mediating 'Lys-33'-linked ubiquitination of CORO7, promoting interaction between CORO7 and EPS15, thereby facilitating actin polymerization and post-Golgi trafficking. Also acts as a regulator of endothelial migration during angiogenesis by controlling the activation of Rho GTPases. The BCR(KLHL20) E3 ubiquitin ligase complex acts as a regulator of neurite outgrowth by mediating ubiquitination and degradation of PDZ-RhoGEF/ARHGEF11 (By similarity).</text>
</comment>
<comment type="pathway">
    <text>Protein modification; protein ubiquitination.</text>
</comment>
<comment type="subunit">
    <text evidence="2">Component of the BCR(KLHL20) E3 ubiquitin ligase complex, at least composed of CUL3, KLHL20 and RBX1. Interacts with PDZ-RhoGEF/ARHGEF11, DAPK1, PML and CORO7. Interacts with F-actin. Interacts with IFN-gamma (IFNG) (By similarity). Interacts (via kelch repeats) with IVNS1ABP (via kelch repeats); this interaction blocks the assembly of CUL3-KLHL20 complex (By similarity).</text>
</comment>
<comment type="subcellular location">
    <subcellularLocation>
        <location evidence="1">Cytoplasm</location>
        <location evidence="1">Perinuclear region</location>
    </subcellularLocation>
    <subcellularLocation>
        <location evidence="1">Nucleus</location>
    </subcellularLocation>
    <subcellularLocation>
        <location evidence="1">Golgi apparatus</location>
        <location evidence="1">trans-Golgi network</location>
    </subcellularLocation>
    <subcellularLocation>
        <location evidence="1">Cell projection</location>
        <location evidence="1">Axon</location>
    </subcellularLocation>
    <subcellularLocation>
        <location evidence="1">Cell projection</location>
        <location evidence="1">Dendrite</location>
    </subcellularLocation>
    <text evidence="1">Localizes in the perinuclear region in normal conditions. Following IFN-alpha or IFN-gamma treatment, it is relocalized and sequestrated to the PML nuclear bodies, preventing DAPK1 ubiquitination (By similarity).</text>
</comment>
<comment type="disruption phenotype">
    <text evidence="4">Approximately 50% of mice die until day 28 of postnatal development (P28). Mice that survive beyond P28 are indistinguishable at birth, but show a progressive corneal dystrophy, associated with an epithelial hyperplasia and an altered corneal epithelial cell differentiation.</text>
</comment>
<comment type="sequence caution" evidence="5">
    <conflict type="erroneous initiation">
        <sequence resource="EMBL-CDS" id="BAD90319"/>
    </conflict>
    <text>Extended N-terminus.</text>
</comment>
<keyword id="KW-0009">Actin-binding</keyword>
<keyword id="KW-0966">Cell projection</keyword>
<keyword id="KW-0963">Cytoplasm</keyword>
<keyword id="KW-0333">Golgi apparatus</keyword>
<keyword id="KW-0880">Kelch repeat</keyword>
<keyword id="KW-0539">Nucleus</keyword>
<keyword id="KW-0653">Protein transport</keyword>
<keyword id="KW-1185">Reference proteome</keyword>
<keyword id="KW-0677">Repeat</keyword>
<keyword id="KW-0813">Transport</keyword>
<keyword id="KW-0833">Ubl conjugation pathway</keyword>
<reference key="1">
    <citation type="submission" date="2005-02" db="EMBL/GenBank/DDBJ databases">
        <title>Prediction of the coding sequences of mouse homologues of KIAA gene. The complete nucleotide sequences of mouse KIAA-homologous cDNAs identified by screening of terminal sequences of cDNA clones randomly sampled from size-fractionated libraries.</title>
        <authorList>
            <person name="Okazaki N."/>
            <person name="Kikuno R.F."/>
            <person name="Ohara R."/>
            <person name="Inamoto S."/>
            <person name="Nagase T."/>
            <person name="Ohara O."/>
            <person name="Koga H."/>
        </authorList>
    </citation>
    <scope>NUCLEOTIDE SEQUENCE [LARGE SCALE MRNA]</scope>
    <source>
        <tissue>Fetal brain</tissue>
    </source>
</reference>
<reference key="2">
    <citation type="journal article" date="2005" name="Science">
        <title>The transcriptional landscape of the mammalian genome.</title>
        <authorList>
            <person name="Carninci P."/>
            <person name="Kasukawa T."/>
            <person name="Katayama S."/>
            <person name="Gough J."/>
            <person name="Frith M.C."/>
            <person name="Maeda N."/>
            <person name="Oyama R."/>
            <person name="Ravasi T."/>
            <person name="Lenhard B."/>
            <person name="Wells C."/>
            <person name="Kodzius R."/>
            <person name="Shimokawa K."/>
            <person name="Bajic V.B."/>
            <person name="Brenner S.E."/>
            <person name="Batalov S."/>
            <person name="Forrest A.R."/>
            <person name="Zavolan M."/>
            <person name="Davis M.J."/>
            <person name="Wilming L.G."/>
            <person name="Aidinis V."/>
            <person name="Allen J.E."/>
            <person name="Ambesi-Impiombato A."/>
            <person name="Apweiler R."/>
            <person name="Aturaliya R.N."/>
            <person name="Bailey T.L."/>
            <person name="Bansal M."/>
            <person name="Baxter L."/>
            <person name="Beisel K.W."/>
            <person name="Bersano T."/>
            <person name="Bono H."/>
            <person name="Chalk A.M."/>
            <person name="Chiu K.P."/>
            <person name="Choudhary V."/>
            <person name="Christoffels A."/>
            <person name="Clutterbuck D.R."/>
            <person name="Crowe M.L."/>
            <person name="Dalla E."/>
            <person name="Dalrymple B.P."/>
            <person name="de Bono B."/>
            <person name="Della Gatta G."/>
            <person name="di Bernardo D."/>
            <person name="Down T."/>
            <person name="Engstrom P."/>
            <person name="Fagiolini M."/>
            <person name="Faulkner G."/>
            <person name="Fletcher C.F."/>
            <person name="Fukushima T."/>
            <person name="Furuno M."/>
            <person name="Futaki S."/>
            <person name="Gariboldi M."/>
            <person name="Georgii-Hemming P."/>
            <person name="Gingeras T.R."/>
            <person name="Gojobori T."/>
            <person name="Green R.E."/>
            <person name="Gustincich S."/>
            <person name="Harbers M."/>
            <person name="Hayashi Y."/>
            <person name="Hensch T.K."/>
            <person name="Hirokawa N."/>
            <person name="Hill D."/>
            <person name="Huminiecki L."/>
            <person name="Iacono M."/>
            <person name="Ikeo K."/>
            <person name="Iwama A."/>
            <person name="Ishikawa T."/>
            <person name="Jakt M."/>
            <person name="Kanapin A."/>
            <person name="Katoh M."/>
            <person name="Kawasawa Y."/>
            <person name="Kelso J."/>
            <person name="Kitamura H."/>
            <person name="Kitano H."/>
            <person name="Kollias G."/>
            <person name="Krishnan S.P."/>
            <person name="Kruger A."/>
            <person name="Kummerfeld S.K."/>
            <person name="Kurochkin I.V."/>
            <person name="Lareau L.F."/>
            <person name="Lazarevic D."/>
            <person name="Lipovich L."/>
            <person name="Liu J."/>
            <person name="Liuni S."/>
            <person name="McWilliam S."/>
            <person name="Madan Babu M."/>
            <person name="Madera M."/>
            <person name="Marchionni L."/>
            <person name="Matsuda H."/>
            <person name="Matsuzawa S."/>
            <person name="Miki H."/>
            <person name="Mignone F."/>
            <person name="Miyake S."/>
            <person name="Morris K."/>
            <person name="Mottagui-Tabar S."/>
            <person name="Mulder N."/>
            <person name="Nakano N."/>
            <person name="Nakauchi H."/>
            <person name="Ng P."/>
            <person name="Nilsson R."/>
            <person name="Nishiguchi S."/>
            <person name="Nishikawa S."/>
            <person name="Nori F."/>
            <person name="Ohara O."/>
            <person name="Okazaki Y."/>
            <person name="Orlando V."/>
            <person name="Pang K.C."/>
            <person name="Pavan W.J."/>
            <person name="Pavesi G."/>
            <person name="Pesole G."/>
            <person name="Petrovsky N."/>
            <person name="Piazza S."/>
            <person name="Reed J."/>
            <person name="Reid J.F."/>
            <person name="Ring B.Z."/>
            <person name="Ringwald M."/>
            <person name="Rost B."/>
            <person name="Ruan Y."/>
            <person name="Salzberg S.L."/>
            <person name="Sandelin A."/>
            <person name="Schneider C."/>
            <person name="Schoenbach C."/>
            <person name="Sekiguchi K."/>
            <person name="Semple C.A."/>
            <person name="Seno S."/>
            <person name="Sessa L."/>
            <person name="Sheng Y."/>
            <person name="Shibata Y."/>
            <person name="Shimada H."/>
            <person name="Shimada K."/>
            <person name="Silva D."/>
            <person name="Sinclair B."/>
            <person name="Sperling S."/>
            <person name="Stupka E."/>
            <person name="Sugiura K."/>
            <person name="Sultana R."/>
            <person name="Takenaka Y."/>
            <person name="Taki K."/>
            <person name="Tammoja K."/>
            <person name="Tan S.L."/>
            <person name="Tang S."/>
            <person name="Taylor M.S."/>
            <person name="Tegner J."/>
            <person name="Teichmann S.A."/>
            <person name="Ueda H.R."/>
            <person name="van Nimwegen E."/>
            <person name="Verardo R."/>
            <person name="Wei C.L."/>
            <person name="Yagi K."/>
            <person name="Yamanishi H."/>
            <person name="Zabarovsky E."/>
            <person name="Zhu S."/>
            <person name="Zimmer A."/>
            <person name="Hide W."/>
            <person name="Bult C."/>
            <person name="Grimmond S.M."/>
            <person name="Teasdale R.D."/>
            <person name="Liu E.T."/>
            <person name="Brusic V."/>
            <person name="Quackenbush J."/>
            <person name="Wahlestedt C."/>
            <person name="Mattick J.S."/>
            <person name="Hume D.A."/>
            <person name="Kai C."/>
            <person name="Sasaki D."/>
            <person name="Tomaru Y."/>
            <person name="Fukuda S."/>
            <person name="Kanamori-Katayama M."/>
            <person name="Suzuki M."/>
            <person name="Aoki J."/>
            <person name="Arakawa T."/>
            <person name="Iida J."/>
            <person name="Imamura K."/>
            <person name="Itoh M."/>
            <person name="Kato T."/>
            <person name="Kawaji H."/>
            <person name="Kawagashira N."/>
            <person name="Kawashima T."/>
            <person name="Kojima M."/>
            <person name="Kondo S."/>
            <person name="Konno H."/>
            <person name="Nakano K."/>
            <person name="Ninomiya N."/>
            <person name="Nishio T."/>
            <person name="Okada M."/>
            <person name="Plessy C."/>
            <person name="Shibata K."/>
            <person name="Shiraki T."/>
            <person name="Suzuki S."/>
            <person name="Tagami M."/>
            <person name="Waki K."/>
            <person name="Watahiki A."/>
            <person name="Okamura-Oho Y."/>
            <person name="Suzuki H."/>
            <person name="Kawai J."/>
            <person name="Hayashizaki Y."/>
        </authorList>
    </citation>
    <scope>NUCLEOTIDE SEQUENCE [LARGE SCALE MRNA]</scope>
    <source>
        <strain>C57BL/6J</strain>
        <tissue>Head</tissue>
    </source>
</reference>
<reference key="3">
    <citation type="journal article" date="2004" name="Genome Res.">
        <title>The status, quality, and expansion of the NIH full-length cDNA project: the Mammalian Gene Collection (MGC).</title>
        <authorList>
            <consortium name="The MGC Project Team"/>
        </authorList>
    </citation>
    <scope>NUCLEOTIDE SEQUENCE [LARGE SCALE MRNA]</scope>
    <source>
        <strain>FVB/N</strain>
        <tissue>Kidney</tissue>
    </source>
</reference>
<reference key="4">
    <citation type="journal article" date="2012" name="Invest. Ophthalmol. Vis. Sci.">
        <title>KLEIP deficiency in mice causes progressive corneal neovascular dystrophy.</title>
        <authorList>
            <person name="Hahn N."/>
            <person name="Dietz C.T."/>
            <person name="Kuhl S."/>
            <person name="Vossmerbaeumer U."/>
            <person name="Kroll J."/>
        </authorList>
    </citation>
    <scope>DISRUPTION PHENOTYPE</scope>
</reference>
<proteinExistence type="evidence at transcript level"/>
<sequence length="604" mass="67412">MRRCTNIRPGETGMDVTSRCTLGDPNKLPEGVPQPARMPYISDKHPRQTLEVINLLRKHRELCDVVLVVGAKKIYAHRVILSACSPYFRAMFTGELAESRQTEVVIRDIDERAMELLIDFAYTSQITVEEGNVQTLLPAACLLQLAEIQEACCEFLKRQLDPSNCLGIRAFADTHSCRELLRIADKFTQHNFQEVMESEEFMLLPANQLIDIISSDELNVRSEEQVFNAVMAWVKYSIQERRPQLPQVLQHVRLPLLSPKFLVGTVGSDPLIKSDEECRDLVDEAKNYLLLPQERPLMQGPRTRPRKPIRCGEVLFAVGGWCSGDAISSVERYDPQTNEWRMVASMSKRRCGVGVSVLDDLLYAVGGHDGSSYLNSVERYDPKTNQWSSDVAPTSTCRTSVGVAVLGGFLYAVGGQDGVSCLNIVERYDPKENKWTRVASMSTRRLGVAVAVLGGFLYAVGGSDGTSPLNTVERYNPQENRWHTIAPMGTRRKHLGCAVYQDMIYAVGGRDDTTELSSAERYNPRTNQWSPVVAMTSRRSGVGLAVVNGQLMAVGGFDGTTYLKTIEVFDPDANTWRLYGGMNYRRLGGGVGVIKMTHCESHIW</sequence>
<organism>
    <name type="scientific">Mus musculus</name>
    <name type="common">Mouse</name>
    <dbReference type="NCBI Taxonomy" id="10090"/>
    <lineage>
        <taxon>Eukaryota</taxon>
        <taxon>Metazoa</taxon>
        <taxon>Chordata</taxon>
        <taxon>Craniata</taxon>
        <taxon>Vertebrata</taxon>
        <taxon>Euteleostomi</taxon>
        <taxon>Mammalia</taxon>
        <taxon>Eutheria</taxon>
        <taxon>Euarchontoglires</taxon>
        <taxon>Glires</taxon>
        <taxon>Rodentia</taxon>
        <taxon>Myomorpha</taxon>
        <taxon>Muroidea</taxon>
        <taxon>Muridae</taxon>
        <taxon>Murinae</taxon>
        <taxon>Mus</taxon>
        <taxon>Mus</taxon>
    </lineage>
</organism>
<dbReference type="EMBL" id="AK220547">
    <property type="protein sequence ID" value="BAD90319.1"/>
    <property type="status" value="ALT_INIT"/>
    <property type="molecule type" value="mRNA"/>
</dbReference>
<dbReference type="EMBL" id="AK053102">
    <property type="protein sequence ID" value="BAC35266.1"/>
    <property type="molecule type" value="mRNA"/>
</dbReference>
<dbReference type="EMBL" id="BC019571">
    <property type="protein sequence ID" value="AAH19571.2"/>
    <property type="molecule type" value="mRNA"/>
</dbReference>
<dbReference type="CCDS" id="CCDS35748.1"/>
<dbReference type="RefSeq" id="NP_001034571.1">
    <property type="nucleotide sequence ID" value="NM_001039482.1"/>
</dbReference>
<dbReference type="SMR" id="Q8VCK5"/>
<dbReference type="FunCoup" id="Q8VCK5">
    <property type="interactions" value="3947"/>
</dbReference>
<dbReference type="STRING" id="10090.ENSMUSP00000107238"/>
<dbReference type="GlyGen" id="Q8VCK5">
    <property type="glycosylation" value="2 sites, 1 O-linked glycan (2 sites)"/>
</dbReference>
<dbReference type="iPTMnet" id="Q8VCK5"/>
<dbReference type="PhosphoSitePlus" id="Q8VCK5"/>
<dbReference type="PaxDb" id="10090-ENSMUSP00000107238"/>
<dbReference type="ProteomicsDB" id="264846"/>
<dbReference type="Pumba" id="Q8VCK5"/>
<dbReference type="Antibodypedia" id="20562">
    <property type="antibodies" value="106 antibodies from 20 providers"/>
</dbReference>
<dbReference type="DNASU" id="226541"/>
<dbReference type="Ensembl" id="ENSMUST00000111611.8">
    <property type="protein sequence ID" value="ENSMUSP00000107238.2"/>
    <property type="gene ID" value="ENSMUSG00000026705.17"/>
</dbReference>
<dbReference type="Ensembl" id="ENSMUST00000117467.7">
    <property type="protein sequence ID" value="ENSMUSP00000114044.2"/>
    <property type="gene ID" value="ENSMUSG00000026705.17"/>
</dbReference>
<dbReference type="GeneID" id="226541"/>
<dbReference type="KEGG" id="mmu:226541"/>
<dbReference type="UCSC" id="uc007dff.1">
    <property type="organism name" value="mouse"/>
</dbReference>
<dbReference type="AGR" id="MGI:2444855"/>
<dbReference type="CTD" id="27252"/>
<dbReference type="MGI" id="MGI:2444855">
    <property type="gene designation" value="Klhl20"/>
</dbReference>
<dbReference type="VEuPathDB" id="HostDB:ENSMUSG00000026705"/>
<dbReference type="eggNOG" id="KOG4441">
    <property type="taxonomic scope" value="Eukaryota"/>
</dbReference>
<dbReference type="GeneTree" id="ENSGT00940000155161"/>
<dbReference type="HOGENOM" id="CLU_004253_14_2_1"/>
<dbReference type="InParanoid" id="Q8VCK5"/>
<dbReference type="OMA" id="CAVFNNL"/>
<dbReference type="OrthoDB" id="45365at2759"/>
<dbReference type="PhylomeDB" id="Q8VCK5"/>
<dbReference type="TreeFam" id="TF329218"/>
<dbReference type="Reactome" id="R-MMU-8951664">
    <property type="pathway name" value="Neddylation"/>
</dbReference>
<dbReference type="Reactome" id="R-MMU-983168">
    <property type="pathway name" value="Antigen processing: Ubiquitination &amp; Proteasome degradation"/>
</dbReference>
<dbReference type="UniPathway" id="UPA00143"/>
<dbReference type="BioGRID-ORCS" id="226541">
    <property type="hits" value="2 hits in 78 CRISPR screens"/>
</dbReference>
<dbReference type="PRO" id="PR:Q8VCK5"/>
<dbReference type="Proteomes" id="UP000000589">
    <property type="component" value="Chromosome 1"/>
</dbReference>
<dbReference type="RNAct" id="Q8VCK5">
    <property type="molecule type" value="protein"/>
</dbReference>
<dbReference type="Bgee" id="ENSMUSG00000026705">
    <property type="expression patterns" value="Expressed in facial nucleus and 183 other cell types or tissues"/>
</dbReference>
<dbReference type="ExpressionAtlas" id="Q8VCK5">
    <property type="expression patterns" value="baseline and differential"/>
</dbReference>
<dbReference type="GO" id="GO:0030424">
    <property type="term" value="C:axon"/>
    <property type="evidence" value="ECO:0007669"/>
    <property type="project" value="UniProtKB-SubCell"/>
</dbReference>
<dbReference type="GO" id="GO:0031463">
    <property type="term" value="C:Cul3-RING ubiquitin ligase complex"/>
    <property type="evidence" value="ECO:0000250"/>
    <property type="project" value="UniProtKB"/>
</dbReference>
<dbReference type="GO" id="GO:0005737">
    <property type="term" value="C:cytoplasm"/>
    <property type="evidence" value="ECO:0000250"/>
    <property type="project" value="UniProtKB"/>
</dbReference>
<dbReference type="GO" id="GO:0005829">
    <property type="term" value="C:cytosol"/>
    <property type="evidence" value="ECO:0007669"/>
    <property type="project" value="Ensembl"/>
</dbReference>
<dbReference type="GO" id="GO:0030425">
    <property type="term" value="C:dendrite"/>
    <property type="evidence" value="ECO:0007669"/>
    <property type="project" value="UniProtKB-SubCell"/>
</dbReference>
<dbReference type="GO" id="GO:0048471">
    <property type="term" value="C:perinuclear region of cytoplasm"/>
    <property type="evidence" value="ECO:0007669"/>
    <property type="project" value="UniProtKB-SubCell"/>
</dbReference>
<dbReference type="GO" id="GO:0016605">
    <property type="term" value="C:PML body"/>
    <property type="evidence" value="ECO:0000250"/>
    <property type="project" value="UniProtKB"/>
</dbReference>
<dbReference type="GO" id="GO:0005802">
    <property type="term" value="C:trans-Golgi network"/>
    <property type="evidence" value="ECO:0000250"/>
    <property type="project" value="UniProtKB"/>
</dbReference>
<dbReference type="GO" id="GO:0003779">
    <property type="term" value="F:actin binding"/>
    <property type="evidence" value="ECO:0007669"/>
    <property type="project" value="UniProtKB-KW"/>
</dbReference>
<dbReference type="GO" id="GO:0019964">
    <property type="term" value="F:type II interferon binding"/>
    <property type="evidence" value="ECO:0000250"/>
    <property type="project" value="UniProtKB"/>
</dbReference>
<dbReference type="GO" id="GO:0004842">
    <property type="term" value="F:ubiquitin-protein transferase activity"/>
    <property type="evidence" value="ECO:0007669"/>
    <property type="project" value="Ensembl"/>
</dbReference>
<dbReference type="GO" id="GO:0006895">
    <property type="term" value="P:Golgi to endosome transport"/>
    <property type="evidence" value="ECO:0000250"/>
    <property type="project" value="UniProtKB"/>
</dbReference>
<dbReference type="GO" id="GO:0043066">
    <property type="term" value="P:negative regulation of apoptotic process"/>
    <property type="evidence" value="ECO:0000250"/>
    <property type="project" value="UniProtKB"/>
</dbReference>
<dbReference type="GO" id="GO:0043161">
    <property type="term" value="P:proteasome-mediated ubiquitin-dependent protein catabolic process"/>
    <property type="evidence" value="ECO:0000250"/>
    <property type="project" value="UniProtKB"/>
</dbReference>
<dbReference type="GO" id="GO:1990390">
    <property type="term" value="P:protein K33-linked ubiquitination"/>
    <property type="evidence" value="ECO:0000250"/>
    <property type="project" value="UniProtKB"/>
</dbReference>
<dbReference type="GO" id="GO:0015031">
    <property type="term" value="P:protein transport"/>
    <property type="evidence" value="ECO:0007669"/>
    <property type="project" value="UniProtKB-KW"/>
</dbReference>
<dbReference type="GO" id="GO:0016567">
    <property type="term" value="P:protein ubiquitination"/>
    <property type="evidence" value="ECO:0000250"/>
    <property type="project" value="UniProtKB"/>
</dbReference>
<dbReference type="CDD" id="cd18459">
    <property type="entry name" value="BACK_KLHL20"/>
    <property type="match status" value="1"/>
</dbReference>
<dbReference type="CDD" id="cd18249">
    <property type="entry name" value="BTB_POZ_KLHL20_KLEIP"/>
    <property type="match status" value="1"/>
</dbReference>
<dbReference type="FunFam" id="1.25.40.420:FF:000001">
    <property type="entry name" value="Kelch-like family member 12"/>
    <property type="match status" value="1"/>
</dbReference>
<dbReference type="FunFam" id="2.120.10.80:FF:000006">
    <property type="entry name" value="Kelch-like family member 20"/>
    <property type="match status" value="1"/>
</dbReference>
<dbReference type="FunFam" id="3.30.710.10:FF:000001">
    <property type="entry name" value="Kelch-like family member 20"/>
    <property type="match status" value="1"/>
</dbReference>
<dbReference type="Gene3D" id="1.25.40.420">
    <property type="match status" value="1"/>
</dbReference>
<dbReference type="Gene3D" id="2.120.10.80">
    <property type="entry name" value="Kelch-type beta propeller"/>
    <property type="match status" value="1"/>
</dbReference>
<dbReference type="Gene3D" id="3.30.710.10">
    <property type="entry name" value="Potassium Channel Kv1.1, Chain A"/>
    <property type="match status" value="1"/>
</dbReference>
<dbReference type="InterPro" id="IPR011705">
    <property type="entry name" value="BACK"/>
</dbReference>
<dbReference type="InterPro" id="IPR017096">
    <property type="entry name" value="BTB-kelch_protein"/>
</dbReference>
<dbReference type="InterPro" id="IPR000210">
    <property type="entry name" value="BTB/POZ_dom"/>
</dbReference>
<dbReference type="InterPro" id="IPR011043">
    <property type="entry name" value="Gal_Oxase/kelch_b-propeller"/>
</dbReference>
<dbReference type="InterPro" id="IPR015915">
    <property type="entry name" value="Kelch-typ_b-propeller"/>
</dbReference>
<dbReference type="InterPro" id="IPR006652">
    <property type="entry name" value="Kelch_1"/>
</dbReference>
<dbReference type="InterPro" id="IPR011333">
    <property type="entry name" value="SKP1/BTB/POZ_sf"/>
</dbReference>
<dbReference type="PANTHER" id="PTHR24412">
    <property type="entry name" value="KELCH PROTEIN"/>
    <property type="match status" value="1"/>
</dbReference>
<dbReference type="PANTHER" id="PTHR24412:SF451">
    <property type="entry name" value="KELCH-LIKE PROTEIN 20"/>
    <property type="match status" value="1"/>
</dbReference>
<dbReference type="Pfam" id="PF07707">
    <property type="entry name" value="BACK"/>
    <property type="match status" value="1"/>
</dbReference>
<dbReference type="Pfam" id="PF00651">
    <property type="entry name" value="BTB"/>
    <property type="match status" value="1"/>
</dbReference>
<dbReference type="Pfam" id="PF01344">
    <property type="entry name" value="Kelch_1"/>
    <property type="match status" value="2"/>
</dbReference>
<dbReference type="Pfam" id="PF24681">
    <property type="entry name" value="Kelch_KLHDC2_KLHL20_DRC7"/>
    <property type="match status" value="1"/>
</dbReference>
<dbReference type="PIRSF" id="PIRSF037037">
    <property type="entry name" value="Kelch-like_protein_gigaxonin"/>
    <property type="match status" value="1"/>
</dbReference>
<dbReference type="PRINTS" id="PR00501">
    <property type="entry name" value="KELCHREPEAT"/>
</dbReference>
<dbReference type="SMART" id="SM00875">
    <property type="entry name" value="BACK"/>
    <property type="match status" value="1"/>
</dbReference>
<dbReference type="SMART" id="SM00225">
    <property type="entry name" value="BTB"/>
    <property type="match status" value="1"/>
</dbReference>
<dbReference type="SMART" id="SM00612">
    <property type="entry name" value="Kelch"/>
    <property type="match status" value="6"/>
</dbReference>
<dbReference type="SUPFAM" id="SSF50965">
    <property type="entry name" value="Galactose oxidase, central domain"/>
    <property type="match status" value="1"/>
</dbReference>
<dbReference type="SUPFAM" id="SSF54695">
    <property type="entry name" value="POZ domain"/>
    <property type="match status" value="1"/>
</dbReference>
<dbReference type="PROSITE" id="PS50097">
    <property type="entry name" value="BTB"/>
    <property type="match status" value="1"/>
</dbReference>
<accession>Q8VCK5</accession>
<accession>Q5DTH3</accession>
<accession>Q8BWA2</accession>
<feature type="chain" id="PRO_0000119124" description="Kelch-like protein 20">
    <location>
        <begin position="1"/>
        <end position="604"/>
    </location>
</feature>
<feature type="domain" description="BTB" evidence="3">
    <location>
        <begin position="63"/>
        <end position="130"/>
    </location>
</feature>
<feature type="domain" description="BACK">
    <location>
        <begin position="165"/>
        <end position="267"/>
    </location>
</feature>
<feature type="repeat" description="Kelch 1">
    <location>
        <begin position="314"/>
        <end position="360"/>
    </location>
</feature>
<feature type="repeat" description="Kelch 2">
    <location>
        <begin position="362"/>
        <end position="408"/>
    </location>
</feature>
<feature type="repeat" description="Kelch 3">
    <location>
        <begin position="409"/>
        <end position="455"/>
    </location>
</feature>
<feature type="repeat" description="Kelch 4">
    <location>
        <begin position="457"/>
        <end position="502"/>
    </location>
</feature>
<feature type="repeat" description="Kelch 5">
    <location>
        <begin position="504"/>
        <end position="549"/>
    </location>
</feature>
<feature type="repeat" description="Kelch 6">
    <location>
        <begin position="551"/>
        <end position="596"/>
    </location>
</feature>